<protein>
    <recommendedName>
        <fullName>Gastrin</fullName>
    </recommendedName>
    <component>
        <recommendedName>
            <fullName>Big gastrin</fullName>
        </recommendedName>
        <alternativeName>
            <fullName>Gastrin-34</fullName>
            <shortName>G34</shortName>
        </alternativeName>
    </component>
    <component>
        <recommendedName>
            <fullName>Gastrin</fullName>
        </recommendedName>
    </component>
</protein>
<proteinExistence type="evidence at protein level"/>
<reference key="1">
    <citation type="journal article" date="1997" name="DNA Seq.">
        <title>Molecular cloning and sequence of the ovine gastrin gene.</title>
        <authorList>
            <person name="Moore C."/>
            <person name="Jie R."/>
            <person name="Shulkes A."/>
            <person name="Baldwin G.S."/>
        </authorList>
    </citation>
    <scope>NUCLEOTIDE SEQUENCE [GENOMIC DNA]</scope>
</reference>
<reference key="2">
    <citation type="journal article" date="1968" name="Nature">
        <title>Isolation, structure and synthesis of ovine and bovine gastrins.</title>
        <authorList>
            <person name="Agarwal K.L."/>
            <person name="Beacham J."/>
            <person name="Bentley P.H."/>
            <person name="Gregory R.A."/>
            <person name="Kenner G.W."/>
            <person name="Sheppard R.C."/>
            <person name="Tracy H.J."/>
        </authorList>
    </citation>
    <scope>PROTEIN SEQUENCE OF 76-92</scope>
</reference>
<accession>O02686</accession>
<evidence type="ECO:0000250" key="1"/>
<evidence type="ECO:0000250" key="2">
    <source>
        <dbReference type="UniProtKB" id="P01353"/>
    </source>
</evidence>
<evidence type="ECO:0000255" key="3"/>
<evidence type="ECO:0000256" key="4">
    <source>
        <dbReference type="SAM" id="MobiDB-lite"/>
    </source>
</evidence>
<evidence type="ECO:0000305" key="5"/>
<keyword id="KW-0027">Amidation</keyword>
<keyword id="KW-0165">Cleavage on pair of basic residues</keyword>
<keyword id="KW-0903">Direct protein sequencing</keyword>
<keyword id="KW-0372">Hormone</keyword>
<keyword id="KW-0597">Phosphoprotein</keyword>
<keyword id="KW-1185">Reference proteome</keyword>
<keyword id="KW-0964">Secreted</keyword>
<keyword id="KW-0732">Signal</keyword>
<keyword id="KW-0765">Sulfation</keyword>
<organism>
    <name type="scientific">Ovis aries</name>
    <name type="common">Sheep</name>
    <dbReference type="NCBI Taxonomy" id="9940"/>
    <lineage>
        <taxon>Eukaryota</taxon>
        <taxon>Metazoa</taxon>
        <taxon>Chordata</taxon>
        <taxon>Craniata</taxon>
        <taxon>Vertebrata</taxon>
        <taxon>Euteleostomi</taxon>
        <taxon>Mammalia</taxon>
        <taxon>Eutheria</taxon>
        <taxon>Laurasiatheria</taxon>
        <taxon>Artiodactyla</taxon>
        <taxon>Ruminantia</taxon>
        <taxon>Pecora</taxon>
        <taxon>Bovidae</taxon>
        <taxon>Caprinae</taxon>
        <taxon>Ovis</taxon>
    </lineage>
</organism>
<dbReference type="EMBL" id="U92801">
    <property type="protein sequence ID" value="AAB51307.1"/>
    <property type="molecule type" value="Genomic_DNA"/>
</dbReference>
<dbReference type="PIR" id="A01619">
    <property type="entry name" value="GMSH"/>
</dbReference>
<dbReference type="STRING" id="9940.ENSOARP00000018691"/>
<dbReference type="PaxDb" id="9940-ENSOARP00000018691"/>
<dbReference type="Ensembl" id="ENSOART00180059391">
    <property type="protein sequence ID" value="ENSOARP00180031973"/>
    <property type="gene ID" value="ENSOARG00180035238"/>
</dbReference>
<dbReference type="Ensembl" id="ENSOART00185045489">
    <property type="protein sequence ID" value="ENSOARP00185022454"/>
    <property type="gene ID" value="ENSOARG00185027627"/>
</dbReference>
<dbReference type="Ensembl" id="ENSOART00225046847">
    <property type="protein sequence ID" value="ENSOARP00225023228"/>
    <property type="gene ID" value="ENSOARG00225028431"/>
</dbReference>
<dbReference type="eggNOG" id="ENOG502SA9S">
    <property type="taxonomic scope" value="Eukaryota"/>
</dbReference>
<dbReference type="Proteomes" id="UP000002356">
    <property type="component" value="Unplaced"/>
</dbReference>
<dbReference type="GO" id="GO:0005615">
    <property type="term" value="C:extracellular space"/>
    <property type="evidence" value="ECO:0000250"/>
    <property type="project" value="AgBase"/>
</dbReference>
<dbReference type="GO" id="GO:0005179">
    <property type="term" value="F:hormone activity"/>
    <property type="evidence" value="ECO:0007669"/>
    <property type="project" value="UniProtKB-KW"/>
</dbReference>
<dbReference type="GO" id="GO:0007186">
    <property type="term" value="P:G protein-coupled receptor signaling pathway"/>
    <property type="evidence" value="ECO:0007669"/>
    <property type="project" value="TreeGrafter"/>
</dbReference>
<dbReference type="GO" id="GO:0032094">
    <property type="term" value="P:response to food"/>
    <property type="evidence" value="ECO:0000250"/>
    <property type="project" value="AgBase"/>
</dbReference>
<dbReference type="InterPro" id="IPR039236">
    <property type="entry name" value="GAST"/>
</dbReference>
<dbReference type="InterPro" id="IPR001651">
    <property type="entry name" value="Gastrin/CCK"/>
</dbReference>
<dbReference type="InterPro" id="IPR013152">
    <property type="entry name" value="Gastrin/cholecystokinin_CS"/>
</dbReference>
<dbReference type="PANTHER" id="PTHR19309">
    <property type="entry name" value="GASTRIN"/>
    <property type="match status" value="1"/>
</dbReference>
<dbReference type="PANTHER" id="PTHR19309:SF0">
    <property type="entry name" value="GASTRIN"/>
    <property type="match status" value="1"/>
</dbReference>
<dbReference type="Pfam" id="PF00918">
    <property type="entry name" value="Gastrin"/>
    <property type="match status" value="1"/>
</dbReference>
<dbReference type="PROSITE" id="PS00259">
    <property type="entry name" value="GASTRIN"/>
    <property type="match status" value="1"/>
</dbReference>
<name>GAST_SHEEP</name>
<gene>
    <name type="primary">GAST</name>
    <name type="synonym">GAS</name>
</gene>
<sequence length="104" mass="11532">MQRLCAHALILVLALAAFCEASWKPHSQLQDAPVAPGANKGQEPLRMDRLGPASHPRRQLGLQDPPHMVADLSKKQGPWVEEEEAAYGWMDFGRRSAEEGDQHP</sequence>
<comment type="function">
    <text>Gastrin stimulates the stomach mucosa to produce and secrete hydrochloric acid and the pancreas to secrete its digestive enzymes. It also stimulates smooth muscle contraction and increases blood circulation and water secretion in the stomach and intestine.</text>
</comment>
<comment type="subcellular location">
    <subcellularLocation>
        <location>Secreted</location>
    </subcellularLocation>
</comment>
<comment type="PTM">
    <text evidence="1">Sulfation enhances proteolytic processing, and blocks peptide degradation. Levels of sulfation differ between proteolytically-cleaved gastrins and between tissues (By similarity).</text>
</comment>
<comment type="similarity">
    <text evidence="5">Belongs to the gastrin/cholecystokinin family.</text>
</comment>
<feature type="signal peptide" evidence="3">
    <location>
        <begin position="1"/>
        <end position="21"/>
    </location>
</feature>
<feature type="propeptide" id="PRO_0000010652">
    <location>
        <begin position="22"/>
        <end position="58"/>
    </location>
</feature>
<feature type="peptide" id="PRO_0000010653" description="Big gastrin">
    <location>
        <begin position="59"/>
        <end position="92"/>
    </location>
</feature>
<feature type="peptide" id="PRO_0000010654" description="Gastrin">
    <location>
        <begin position="76"/>
        <end position="92"/>
    </location>
</feature>
<feature type="propeptide" id="PRO_0000010655">
    <location>
        <begin position="96"/>
        <end position="104"/>
    </location>
</feature>
<feature type="region of interest" description="Disordered" evidence="4">
    <location>
        <begin position="26"/>
        <end position="70"/>
    </location>
</feature>
<feature type="modified residue" description="Sulfotyrosine" evidence="1">
    <location>
        <position position="87"/>
    </location>
</feature>
<feature type="modified residue" description="Phenylalanine amide" evidence="1">
    <location>
        <position position="92"/>
    </location>
</feature>
<feature type="modified residue" description="Phosphoserine" evidence="2">
    <location>
        <position position="96"/>
    </location>
</feature>